<gene>
    <name type="primary">nudB</name>
    <name type="synonym">ntpA</name>
    <name type="ordered locus">HI_0316</name>
</gene>
<organism>
    <name type="scientific">Haemophilus influenzae (strain ATCC 51907 / DSM 11121 / KW20 / Rd)</name>
    <dbReference type="NCBI Taxonomy" id="71421"/>
    <lineage>
        <taxon>Bacteria</taxon>
        <taxon>Pseudomonadati</taxon>
        <taxon>Pseudomonadota</taxon>
        <taxon>Gammaproteobacteria</taxon>
        <taxon>Pasteurellales</taxon>
        <taxon>Pasteurellaceae</taxon>
        <taxon>Haemophilus</taxon>
    </lineage>
</organism>
<accession>P44635</accession>
<reference key="1">
    <citation type="journal article" date="1995" name="Science">
        <title>Whole-genome random sequencing and assembly of Haemophilus influenzae Rd.</title>
        <authorList>
            <person name="Fleischmann R.D."/>
            <person name="Adams M.D."/>
            <person name="White O."/>
            <person name="Clayton R.A."/>
            <person name="Kirkness E.F."/>
            <person name="Kerlavage A.R."/>
            <person name="Bult C.J."/>
            <person name="Tomb J.-F."/>
            <person name="Dougherty B.A."/>
            <person name="Merrick J.M."/>
            <person name="McKenney K."/>
            <person name="Sutton G.G."/>
            <person name="FitzHugh W."/>
            <person name="Fields C.A."/>
            <person name="Gocayne J.D."/>
            <person name="Scott J.D."/>
            <person name="Shirley R."/>
            <person name="Liu L.-I."/>
            <person name="Glodek A."/>
            <person name="Kelley J.M."/>
            <person name="Weidman J.F."/>
            <person name="Phillips C.A."/>
            <person name="Spriggs T."/>
            <person name="Hedblom E."/>
            <person name="Cotton M.D."/>
            <person name="Utterback T.R."/>
            <person name="Hanna M.C."/>
            <person name="Nguyen D.T."/>
            <person name="Saudek D.M."/>
            <person name="Brandon R.C."/>
            <person name="Fine L.D."/>
            <person name="Fritchman J.L."/>
            <person name="Fuhrmann J.L."/>
            <person name="Geoghagen N.S.M."/>
            <person name="Gnehm C.L."/>
            <person name="McDonald L.A."/>
            <person name="Small K.V."/>
            <person name="Fraser C.M."/>
            <person name="Smith H.O."/>
            <person name="Venter J.C."/>
        </authorList>
    </citation>
    <scope>NUCLEOTIDE SEQUENCE [LARGE SCALE GENOMIC DNA]</scope>
    <source>
        <strain>ATCC 51907 / DSM 11121 / KW20 / Rd</strain>
    </source>
</reference>
<name>NUDB_HAEIN</name>
<protein>
    <recommendedName>
        <fullName>Dihydroneopterin triphosphate diphosphatase</fullName>
        <ecNumber>3.6.1.67</ecNumber>
    </recommendedName>
    <alternativeName>
        <fullName>Dihydroneopterin triphosphate pyrophosphatase</fullName>
    </alternativeName>
    <alternativeName>
        <fullName>dATP pyrophosphohydrolase</fullName>
    </alternativeName>
</protein>
<comment type="function">
    <text evidence="2">Catalyzes the hydrolysis of dihydroneopterin triphosphate to dihydroneopterin monophosphate and pyrophosphate. Required for efficient folate biosynthesis. Can also hydrolyze nucleoside triphosphates with a preference for dATP.</text>
</comment>
<comment type="catalytic activity">
    <reaction evidence="2">
        <text>7,8-dihydroneopterin 3'-triphosphate + H2O = 7,8-dihydroneopterin 3'-phosphate + diphosphate + H(+)</text>
        <dbReference type="Rhea" id="RHEA:25302"/>
        <dbReference type="ChEBI" id="CHEBI:15377"/>
        <dbReference type="ChEBI" id="CHEBI:15378"/>
        <dbReference type="ChEBI" id="CHEBI:33019"/>
        <dbReference type="ChEBI" id="CHEBI:58462"/>
        <dbReference type="ChEBI" id="CHEBI:58762"/>
        <dbReference type="EC" id="3.6.1.67"/>
    </reaction>
</comment>
<comment type="cofactor">
    <cofactor evidence="2">
        <name>Mg(2+)</name>
        <dbReference type="ChEBI" id="CHEBI:18420"/>
    </cofactor>
    <text evidence="2">Binds 1 Mg(2+) ion per subunit.</text>
</comment>
<comment type="similarity">
    <text evidence="5">Belongs to the Nudix hydrolase family.</text>
</comment>
<keyword id="KW-0289">Folate biosynthesis</keyword>
<keyword id="KW-0378">Hydrolase</keyword>
<keyword id="KW-0460">Magnesium</keyword>
<keyword id="KW-0479">Metal-binding</keyword>
<keyword id="KW-1185">Reference proteome</keyword>
<evidence type="ECO:0000250" key="1"/>
<evidence type="ECO:0000250" key="2">
    <source>
        <dbReference type="UniProtKB" id="P0AFC0"/>
    </source>
</evidence>
<evidence type="ECO:0000255" key="3"/>
<evidence type="ECO:0000255" key="4">
    <source>
        <dbReference type="PROSITE-ProRule" id="PRU00794"/>
    </source>
</evidence>
<evidence type="ECO:0000305" key="5"/>
<sequence>MRSDLTAFLMMQYKNNQSVLVVIYTKDTNRVLMLQRQDDPDFWQSVTGTIESDETPKKTAIRELWEEVRLDISENSTALFDCNESIEFEIFPHFRYKYAPNITHCKEHWFLCEVEKEFIPVLSEHLDFCWVSAKKAVEMTKSQNNAEAIKKYLFNLRR</sequence>
<proteinExistence type="inferred from homology"/>
<dbReference type="EC" id="3.6.1.67"/>
<dbReference type="EMBL" id="L42023">
    <property type="protein sequence ID" value="AAC21980.1"/>
    <property type="molecule type" value="Genomic_DNA"/>
</dbReference>
<dbReference type="PIR" id="H64147">
    <property type="entry name" value="H64147"/>
</dbReference>
<dbReference type="RefSeq" id="NP_438482.2">
    <property type="nucleotide sequence ID" value="NC_000907.1"/>
</dbReference>
<dbReference type="SMR" id="P44635"/>
<dbReference type="STRING" id="71421.HI_0316"/>
<dbReference type="EnsemblBacteria" id="AAC21980">
    <property type="protein sequence ID" value="AAC21980"/>
    <property type="gene ID" value="HI_0316"/>
</dbReference>
<dbReference type="KEGG" id="hin:HI_0316"/>
<dbReference type="PATRIC" id="fig|71421.8.peg.333"/>
<dbReference type="eggNOG" id="COG0494">
    <property type="taxonomic scope" value="Bacteria"/>
</dbReference>
<dbReference type="HOGENOM" id="CLU_128620_0_0_6"/>
<dbReference type="OrthoDB" id="7066556at2"/>
<dbReference type="PhylomeDB" id="P44635"/>
<dbReference type="Proteomes" id="UP000000579">
    <property type="component" value="Chromosome"/>
</dbReference>
<dbReference type="GO" id="GO:0008828">
    <property type="term" value="F:dATP diphosphatase activity"/>
    <property type="evidence" value="ECO:0007669"/>
    <property type="project" value="InterPro"/>
</dbReference>
<dbReference type="GO" id="GO:0019177">
    <property type="term" value="F:dihydroneopterin triphosphate pyrophosphohydrolase activity"/>
    <property type="evidence" value="ECO:0007669"/>
    <property type="project" value="UniProtKB-EC"/>
</dbReference>
<dbReference type="GO" id="GO:0046872">
    <property type="term" value="F:metal ion binding"/>
    <property type="evidence" value="ECO:0007669"/>
    <property type="project" value="UniProtKB-KW"/>
</dbReference>
<dbReference type="GO" id="GO:0046656">
    <property type="term" value="P:folic acid biosynthetic process"/>
    <property type="evidence" value="ECO:0007669"/>
    <property type="project" value="UniProtKB-KW"/>
</dbReference>
<dbReference type="CDD" id="cd04664">
    <property type="entry name" value="NUDIX_DHNTPase_like"/>
    <property type="match status" value="1"/>
</dbReference>
<dbReference type="Gene3D" id="3.90.79.10">
    <property type="entry name" value="Nucleoside Triphosphate Pyrophosphohydrolase"/>
    <property type="match status" value="1"/>
</dbReference>
<dbReference type="InterPro" id="IPR003564">
    <property type="entry name" value="DHNTPase"/>
</dbReference>
<dbReference type="InterPro" id="IPR015797">
    <property type="entry name" value="NUDIX_hydrolase-like_dom_sf"/>
</dbReference>
<dbReference type="InterPro" id="IPR020084">
    <property type="entry name" value="NUDIX_hydrolase_CS"/>
</dbReference>
<dbReference type="InterPro" id="IPR000086">
    <property type="entry name" value="NUDIX_hydrolase_dom"/>
</dbReference>
<dbReference type="NCBIfam" id="NF006961">
    <property type="entry name" value="PRK09438.1"/>
    <property type="match status" value="1"/>
</dbReference>
<dbReference type="PANTHER" id="PTHR43736">
    <property type="entry name" value="ADP-RIBOSE PYROPHOSPHATASE"/>
    <property type="match status" value="1"/>
</dbReference>
<dbReference type="PANTHER" id="PTHR43736:SF1">
    <property type="entry name" value="DIHYDRONEOPTERIN TRIPHOSPHATE DIPHOSPHATASE"/>
    <property type="match status" value="1"/>
</dbReference>
<dbReference type="Pfam" id="PF00293">
    <property type="entry name" value="NUDIX"/>
    <property type="match status" value="1"/>
</dbReference>
<dbReference type="PRINTS" id="PR01404">
    <property type="entry name" value="NPPPHYDRLASE"/>
</dbReference>
<dbReference type="SUPFAM" id="SSF55811">
    <property type="entry name" value="Nudix"/>
    <property type="match status" value="1"/>
</dbReference>
<dbReference type="PROSITE" id="PS51462">
    <property type="entry name" value="NUDIX"/>
    <property type="match status" value="1"/>
</dbReference>
<dbReference type="PROSITE" id="PS00893">
    <property type="entry name" value="NUDIX_BOX"/>
    <property type="match status" value="1"/>
</dbReference>
<feature type="chain" id="PRO_0000056955" description="Dihydroneopterin triphosphate diphosphatase">
    <location>
        <begin position="1"/>
        <end position="158"/>
    </location>
</feature>
<feature type="domain" description="Nudix hydrolase" evidence="4">
    <location>
        <begin position="14"/>
        <end position="153"/>
    </location>
</feature>
<feature type="short sequence motif" description="Nudix box">
    <location>
        <begin position="48"/>
        <end position="69"/>
    </location>
</feature>
<feature type="binding site" evidence="1">
    <location>
        <position position="14"/>
    </location>
    <ligand>
        <name>substrate</name>
    </ligand>
</feature>
<feature type="binding site" evidence="1">
    <location>
        <position position="36"/>
    </location>
    <ligand>
        <name>substrate</name>
    </ligand>
</feature>
<feature type="binding site" evidence="1">
    <location>
        <position position="47"/>
    </location>
    <ligand>
        <name>substrate</name>
    </ligand>
</feature>
<feature type="binding site" evidence="1">
    <location>
        <position position="63"/>
    </location>
    <ligand>
        <name>Mg(2+)</name>
        <dbReference type="ChEBI" id="CHEBI:18420"/>
    </ligand>
</feature>
<feature type="binding site" evidence="1">
    <location>
        <position position="67"/>
    </location>
    <ligand>
        <name>Mg(2+)</name>
        <dbReference type="ChEBI" id="CHEBI:18420"/>
    </ligand>
</feature>
<feature type="binding site" evidence="3">
    <location>
        <begin position="88"/>
        <end position="91"/>
    </location>
    <ligand>
        <name>substrate</name>
    </ligand>
</feature>
<feature type="binding site" evidence="1">
    <location>
        <position position="124"/>
    </location>
    <ligand>
        <name>Mg(2+)</name>
        <dbReference type="ChEBI" id="CHEBI:18420"/>
    </ligand>
</feature>
<feature type="binding site" evidence="3">
    <location>
        <position position="142"/>
    </location>
    <ligand>
        <name>substrate</name>
    </ligand>
</feature>